<accession>P29615</accession>
<accession>A0JQ50</accession>
<accession>Q4V3V7</accession>
<accession>Q9W0J4</accession>
<comment type="function">
    <text evidence="3 4">Unlikely to play an active role in the humoral immune defense. May have a function in the digestion of bacteria in the food.</text>
</comment>
<comment type="catalytic activity">
    <reaction>
        <text>Hydrolysis of (1-&gt;4)-beta-linkages between N-acetylmuramic acid and N-acetyl-D-glucosamine residues in a peptidoglycan and between N-acetyl-D-glucosamine residues in chitodextrins.</text>
        <dbReference type="EC" id="3.2.1.17"/>
    </reaction>
</comment>
<comment type="tissue specificity">
    <text evidence="3 4">Salivary gland.</text>
</comment>
<comment type="developmental stage">
    <text evidence="3 4">Only expressed in adults.</text>
</comment>
<comment type="similarity">
    <text evidence="2">Belongs to the glycosyl hydrolase 22 family.</text>
</comment>
<comment type="sequence caution" evidence="5">
    <conflict type="erroneous initiation">
        <sequence resource="EMBL-CDS" id="ABK57077"/>
    </conflict>
</comment>
<evidence type="ECO:0000255" key="1"/>
<evidence type="ECO:0000255" key="2">
    <source>
        <dbReference type="PROSITE-ProRule" id="PRU00680"/>
    </source>
</evidence>
<evidence type="ECO:0000269" key="3">
    <source>
    </source>
</evidence>
<evidence type="ECO:0000269" key="4">
    <source>
    </source>
</evidence>
<evidence type="ECO:0000305" key="5"/>
<keyword id="KW-0929">Antimicrobial</keyword>
<keyword id="KW-0081">Bacteriolytic enzyme</keyword>
<keyword id="KW-1015">Disulfide bond</keyword>
<keyword id="KW-0326">Glycosidase</keyword>
<keyword id="KW-0378">Hydrolase</keyword>
<keyword id="KW-1185">Reference proteome</keyword>
<keyword id="KW-0732">Signal</keyword>
<proteinExistence type="evidence at transcript level"/>
<sequence>MKAFLVICALTLTAVATQARTMDRCSLAREMSKLGVPRDQLAKWTCIAQHESSFRTGVVGPANSNGSNDYGIFQINNKYWCKPADGRFSYNECGLSCNALLTDDITNSVKCARKIQRQQGWTAWSTWKYCSGSLPSINSCF</sequence>
<name>LYSP_DROME</name>
<protein>
    <recommendedName>
        <fullName>Lysozyme P</fullName>
        <ecNumber>3.2.1.17</ecNumber>
    </recommendedName>
    <alternativeName>
        <fullName>1,4-beta-N-acetylmuramidase P</fullName>
    </alternativeName>
</protein>
<reference key="1">
    <citation type="journal article" date="1992" name="Mol. Gen. Genet.">
        <title>The lysozyme locus in Drosophila melanogaster: different genes are expressed in midgut and salivary glands.</title>
        <authorList>
            <person name="Kylsten P."/>
            <person name="Kimbrell D.A."/>
            <person name="Daffre S."/>
            <person name="Samakovlis C."/>
            <person name="Hultmark D."/>
        </authorList>
    </citation>
    <scope>NUCLEOTIDE SEQUENCE [GENOMIC DNA]</scope>
    <scope>FUNCTION</scope>
    <scope>TISSUE SPECIFICITY</scope>
    <scope>DEVELOPMENTAL STAGE</scope>
    <source>
        <strain>Canton-S</strain>
    </source>
</reference>
<reference key="2">
    <citation type="journal article" date="1994" name="Mol. Gen. Genet.">
        <title>The lysozyme locus in Drosophila melanogaster: an expanded gene family adapted for expression in the digestive tract.</title>
        <authorList>
            <person name="Daffre S."/>
            <person name="Kylsten P."/>
            <person name="Samakovlis C."/>
            <person name="Hultmark D."/>
        </authorList>
    </citation>
    <scope>NUCLEOTIDE SEQUENCE [GENOMIC DNA]</scope>
    <scope>FUNCTION</scope>
    <scope>TISSUE SPECIFICITY</scope>
    <scope>DEVELOPMENTAL STAGE</scope>
    <source>
        <strain>Canton-S</strain>
    </source>
</reference>
<reference key="3">
    <citation type="journal article" date="2000" name="Science">
        <title>The genome sequence of Drosophila melanogaster.</title>
        <authorList>
            <person name="Adams M.D."/>
            <person name="Celniker S.E."/>
            <person name="Holt R.A."/>
            <person name="Evans C.A."/>
            <person name="Gocayne J.D."/>
            <person name="Amanatides P.G."/>
            <person name="Scherer S.E."/>
            <person name="Li P.W."/>
            <person name="Hoskins R.A."/>
            <person name="Galle R.F."/>
            <person name="George R.A."/>
            <person name="Lewis S.E."/>
            <person name="Richards S."/>
            <person name="Ashburner M."/>
            <person name="Henderson S.N."/>
            <person name="Sutton G.G."/>
            <person name="Wortman J.R."/>
            <person name="Yandell M.D."/>
            <person name="Zhang Q."/>
            <person name="Chen L.X."/>
            <person name="Brandon R.C."/>
            <person name="Rogers Y.-H.C."/>
            <person name="Blazej R.G."/>
            <person name="Champe M."/>
            <person name="Pfeiffer B.D."/>
            <person name="Wan K.H."/>
            <person name="Doyle C."/>
            <person name="Baxter E.G."/>
            <person name="Helt G."/>
            <person name="Nelson C.R."/>
            <person name="Miklos G.L.G."/>
            <person name="Abril J.F."/>
            <person name="Agbayani A."/>
            <person name="An H.-J."/>
            <person name="Andrews-Pfannkoch C."/>
            <person name="Baldwin D."/>
            <person name="Ballew R.M."/>
            <person name="Basu A."/>
            <person name="Baxendale J."/>
            <person name="Bayraktaroglu L."/>
            <person name="Beasley E.M."/>
            <person name="Beeson K.Y."/>
            <person name="Benos P.V."/>
            <person name="Berman B.P."/>
            <person name="Bhandari D."/>
            <person name="Bolshakov S."/>
            <person name="Borkova D."/>
            <person name="Botchan M.R."/>
            <person name="Bouck J."/>
            <person name="Brokstein P."/>
            <person name="Brottier P."/>
            <person name="Burtis K.C."/>
            <person name="Busam D.A."/>
            <person name="Butler H."/>
            <person name="Cadieu E."/>
            <person name="Center A."/>
            <person name="Chandra I."/>
            <person name="Cherry J.M."/>
            <person name="Cawley S."/>
            <person name="Dahlke C."/>
            <person name="Davenport L.B."/>
            <person name="Davies P."/>
            <person name="de Pablos B."/>
            <person name="Delcher A."/>
            <person name="Deng Z."/>
            <person name="Mays A.D."/>
            <person name="Dew I."/>
            <person name="Dietz S.M."/>
            <person name="Dodson K."/>
            <person name="Doup L.E."/>
            <person name="Downes M."/>
            <person name="Dugan-Rocha S."/>
            <person name="Dunkov B.C."/>
            <person name="Dunn P."/>
            <person name="Durbin K.J."/>
            <person name="Evangelista C.C."/>
            <person name="Ferraz C."/>
            <person name="Ferriera S."/>
            <person name="Fleischmann W."/>
            <person name="Fosler C."/>
            <person name="Gabrielian A.E."/>
            <person name="Garg N.S."/>
            <person name="Gelbart W.M."/>
            <person name="Glasser K."/>
            <person name="Glodek A."/>
            <person name="Gong F."/>
            <person name="Gorrell J.H."/>
            <person name="Gu Z."/>
            <person name="Guan P."/>
            <person name="Harris M."/>
            <person name="Harris N.L."/>
            <person name="Harvey D.A."/>
            <person name="Heiman T.J."/>
            <person name="Hernandez J.R."/>
            <person name="Houck J."/>
            <person name="Hostin D."/>
            <person name="Houston K.A."/>
            <person name="Howland T.J."/>
            <person name="Wei M.-H."/>
            <person name="Ibegwam C."/>
            <person name="Jalali M."/>
            <person name="Kalush F."/>
            <person name="Karpen G.H."/>
            <person name="Ke Z."/>
            <person name="Kennison J.A."/>
            <person name="Ketchum K.A."/>
            <person name="Kimmel B.E."/>
            <person name="Kodira C.D."/>
            <person name="Kraft C.L."/>
            <person name="Kravitz S."/>
            <person name="Kulp D."/>
            <person name="Lai Z."/>
            <person name="Lasko P."/>
            <person name="Lei Y."/>
            <person name="Levitsky A.A."/>
            <person name="Li J.H."/>
            <person name="Li Z."/>
            <person name="Liang Y."/>
            <person name="Lin X."/>
            <person name="Liu X."/>
            <person name="Mattei B."/>
            <person name="McIntosh T.C."/>
            <person name="McLeod M.P."/>
            <person name="McPherson D."/>
            <person name="Merkulov G."/>
            <person name="Milshina N.V."/>
            <person name="Mobarry C."/>
            <person name="Morris J."/>
            <person name="Moshrefi A."/>
            <person name="Mount S.M."/>
            <person name="Moy M."/>
            <person name="Murphy B."/>
            <person name="Murphy L."/>
            <person name="Muzny D.M."/>
            <person name="Nelson D.L."/>
            <person name="Nelson D.R."/>
            <person name="Nelson K.A."/>
            <person name="Nixon K."/>
            <person name="Nusskern D.R."/>
            <person name="Pacleb J.M."/>
            <person name="Palazzolo M."/>
            <person name="Pittman G.S."/>
            <person name="Pan S."/>
            <person name="Pollard J."/>
            <person name="Puri V."/>
            <person name="Reese M.G."/>
            <person name="Reinert K."/>
            <person name="Remington K."/>
            <person name="Saunders R.D.C."/>
            <person name="Scheeler F."/>
            <person name="Shen H."/>
            <person name="Shue B.C."/>
            <person name="Siden-Kiamos I."/>
            <person name="Simpson M."/>
            <person name="Skupski M.P."/>
            <person name="Smith T.J."/>
            <person name="Spier E."/>
            <person name="Spradling A.C."/>
            <person name="Stapleton M."/>
            <person name="Strong R."/>
            <person name="Sun E."/>
            <person name="Svirskas R."/>
            <person name="Tector C."/>
            <person name="Turner R."/>
            <person name="Venter E."/>
            <person name="Wang A.H."/>
            <person name="Wang X."/>
            <person name="Wang Z.-Y."/>
            <person name="Wassarman D.A."/>
            <person name="Weinstock G.M."/>
            <person name="Weissenbach J."/>
            <person name="Williams S.M."/>
            <person name="Woodage T."/>
            <person name="Worley K.C."/>
            <person name="Wu D."/>
            <person name="Yang S."/>
            <person name="Yao Q.A."/>
            <person name="Ye J."/>
            <person name="Yeh R.-F."/>
            <person name="Zaveri J.S."/>
            <person name="Zhan M."/>
            <person name="Zhang G."/>
            <person name="Zhao Q."/>
            <person name="Zheng L."/>
            <person name="Zheng X.H."/>
            <person name="Zhong F.N."/>
            <person name="Zhong W."/>
            <person name="Zhou X."/>
            <person name="Zhu S.C."/>
            <person name="Zhu X."/>
            <person name="Smith H.O."/>
            <person name="Gibbs R.A."/>
            <person name="Myers E.W."/>
            <person name="Rubin G.M."/>
            <person name="Venter J.C."/>
        </authorList>
    </citation>
    <scope>NUCLEOTIDE SEQUENCE [LARGE SCALE GENOMIC DNA]</scope>
    <source>
        <strain>Berkeley</strain>
    </source>
</reference>
<reference key="4">
    <citation type="journal article" date="2002" name="Genome Biol.">
        <title>Annotation of the Drosophila melanogaster euchromatic genome: a systematic review.</title>
        <authorList>
            <person name="Misra S."/>
            <person name="Crosby M.A."/>
            <person name="Mungall C.J."/>
            <person name="Matthews B.B."/>
            <person name="Campbell K.S."/>
            <person name="Hradecky P."/>
            <person name="Huang Y."/>
            <person name="Kaminker J.S."/>
            <person name="Millburn G.H."/>
            <person name="Prochnik S.E."/>
            <person name="Smith C.D."/>
            <person name="Tupy J.L."/>
            <person name="Whitfield E.J."/>
            <person name="Bayraktaroglu L."/>
            <person name="Berman B.P."/>
            <person name="Bettencourt B.R."/>
            <person name="Celniker S.E."/>
            <person name="de Grey A.D.N.J."/>
            <person name="Drysdale R.A."/>
            <person name="Harris N.L."/>
            <person name="Richter J."/>
            <person name="Russo S."/>
            <person name="Schroeder A.J."/>
            <person name="Shu S.Q."/>
            <person name="Stapleton M."/>
            <person name="Yamada C."/>
            <person name="Ashburner M."/>
            <person name="Gelbart W.M."/>
            <person name="Rubin G.M."/>
            <person name="Lewis S.E."/>
        </authorList>
    </citation>
    <scope>GENOME REANNOTATION</scope>
    <source>
        <strain>Berkeley</strain>
    </source>
</reference>
<reference key="5">
    <citation type="submission" date="2006-11" db="EMBL/GenBank/DDBJ databases">
        <authorList>
            <person name="Stapleton M."/>
            <person name="Carlson J.W."/>
            <person name="Chavez C."/>
            <person name="Frise E."/>
            <person name="George R.A."/>
            <person name="Kapadia B."/>
            <person name="Pacleb J.M."/>
            <person name="Park S."/>
            <person name="Wan K.H."/>
            <person name="Yu C."/>
            <person name="Celniker S.E."/>
        </authorList>
    </citation>
    <scope>NUCLEOTIDE SEQUENCE [LARGE SCALE MRNA]</scope>
    <source>
        <strain>Berkeley</strain>
    </source>
</reference>
<dbReference type="EC" id="3.2.1.17"/>
<dbReference type="EMBL" id="X58383">
    <property type="protein sequence ID" value="CAA41273.1"/>
    <property type="molecule type" value="Genomic_DNA"/>
</dbReference>
<dbReference type="EMBL" id="AE014296">
    <property type="protein sequence ID" value="AAF47452.1"/>
    <property type="molecule type" value="Genomic_DNA"/>
</dbReference>
<dbReference type="EMBL" id="BT023249">
    <property type="protein sequence ID" value="AAY55665.1"/>
    <property type="molecule type" value="mRNA"/>
</dbReference>
<dbReference type="EMBL" id="BT029420">
    <property type="protein sequence ID" value="ABK57077.1"/>
    <property type="status" value="ALT_INIT"/>
    <property type="molecule type" value="mRNA"/>
</dbReference>
<dbReference type="PIR" id="S20915">
    <property type="entry name" value="S20915"/>
</dbReference>
<dbReference type="RefSeq" id="NP_476828.1">
    <property type="nucleotide sequence ID" value="NM_057480.5"/>
</dbReference>
<dbReference type="SMR" id="P29615"/>
<dbReference type="BioGRID" id="63675">
    <property type="interactions" value="1"/>
</dbReference>
<dbReference type="FunCoup" id="P29615">
    <property type="interactions" value="30"/>
</dbReference>
<dbReference type="IntAct" id="P29615">
    <property type="interactions" value="1"/>
</dbReference>
<dbReference type="STRING" id="7227.FBpp0072529"/>
<dbReference type="CAZy" id="GH22">
    <property type="family name" value="Glycoside Hydrolase Family 22"/>
</dbReference>
<dbReference type="PaxDb" id="7227-FBpp0072529"/>
<dbReference type="DNASU" id="38129"/>
<dbReference type="EnsemblMetazoa" id="FBtr0072633">
    <property type="protein sequence ID" value="FBpp0072529"/>
    <property type="gene ID" value="FBgn0004429"/>
</dbReference>
<dbReference type="GeneID" id="38129"/>
<dbReference type="KEGG" id="dme:Dmel_CG9116"/>
<dbReference type="AGR" id="FB:FBgn0004429"/>
<dbReference type="CTD" id="38129"/>
<dbReference type="FlyBase" id="FBgn0004429">
    <property type="gene designation" value="LysP"/>
</dbReference>
<dbReference type="VEuPathDB" id="VectorBase:FBgn0004429"/>
<dbReference type="eggNOG" id="ENOG502S1S1">
    <property type="taxonomic scope" value="Eukaryota"/>
</dbReference>
<dbReference type="GeneTree" id="ENSGT00940000166760"/>
<dbReference type="HOGENOM" id="CLU_111620_2_1_1"/>
<dbReference type="InParanoid" id="P29615"/>
<dbReference type="OMA" id="RYWCKPS"/>
<dbReference type="OrthoDB" id="17373at2759"/>
<dbReference type="PhylomeDB" id="P29615"/>
<dbReference type="Reactome" id="R-DME-5653890">
    <property type="pathway name" value="Lactose synthesis"/>
</dbReference>
<dbReference type="SignaLink" id="P29615"/>
<dbReference type="BioGRID-ORCS" id="38129">
    <property type="hits" value="0 hits in 3 CRISPR screens"/>
</dbReference>
<dbReference type="GenomeRNAi" id="38129"/>
<dbReference type="PRO" id="PR:P29615"/>
<dbReference type="Proteomes" id="UP000000803">
    <property type="component" value="Chromosome 3L"/>
</dbReference>
<dbReference type="Bgee" id="FBgn0004429">
    <property type="expression patterns" value="Expressed in saliva-secreting gland and 22 other cell types or tissues"/>
</dbReference>
<dbReference type="ExpressionAtlas" id="P29615">
    <property type="expression patterns" value="baseline and differential"/>
</dbReference>
<dbReference type="GO" id="GO:0005615">
    <property type="term" value="C:extracellular space"/>
    <property type="evidence" value="ECO:0000250"/>
    <property type="project" value="FlyBase"/>
</dbReference>
<dbReference type="GO" id="GO:0003796">
    <property type="term" value="F:lysozyme activity"/>
    <property type="evidence" value="ECO:0000250"/>
    <property type="project" value="FlyBase"/>
</dbReference>
<dbReference type="GO" id="GO:0050829">
    <property type="term" value="P:defense response to Gram-negative bacterium"/>
    <property type="evidence" value="ECO:0000250"/>
    <property type="project" value="FlyBase"/>
</dbReference>
<dbReference type="GO" id="GO:0031640">
    <property type="term" value="P:killing of cells of another organism"/>
    <property type="evidence" value="ECO:0007669"/>
    <property type="project" value="UniProtKB-KW"/>
</dbReference>
<dbReference type="CDD" id="cd16899">
    <property type="entry name" value="LYZ_C_invert"/>
    <property type="match status" value="1"/>
</dbReference>
<dbReference type="FunFam" id="1.10.530.10:FF:000001">
    <property type="entry name" value="Lysozyme C"/>
    <property type="match status" value="1"/>
</dbReference>
<dbReference type="Gene3D" id="1.10.530.10">
    <property type="match status" value="1"/>
</dbReference>
<dbReference type="InterPro" id="IPR001916">
    <property type="entry name" value="Glyco_hydro_22"/>
</dbReference>
<dbReference type="InterPro" id="IPR019799">
    <property type="entry name" value="Glyco_hydro_22_CS"/>
</dbReference>
<dbReference type="InterPro" id="IPR000974">
    <property type="entry name" value="Glyco_hydro_22_lys"/>
</dbReference>
<dbReference type="InterPro" id="IPR023346">
    <property type="entry name" value="Lysozyme-like_dom_sf"/>
</dbReference>
<dbReference type="PANTHER" id="PTHR11407:SF36">
    <property type="entry name" value="GEO02684P1-RELATED"/>
    <property type="match status" value="1"/>
</dbReference>
<dbReference type="PANTHER" id="PTHR11407">
    <property type="entry name" value="LYSOZYME C"/>
    <property type="match status" value="1"/>
</dbReference>
<dbReference type="Pfam" id="PF00062">
    <property type="entry name" value="Lys"/>
    <property type="match status" value="1"/>
</dbReference>
<dbReference type="PRINTS" id="PR00137">
    <property type="entry name" value="LYSOZYME"/>
</dbReference>
<dbReference type="PRINTS" id="PR00135">
    <property type="entry name" value="LYZLACT"/>
</dbReference>
<dbReference type="SMART" id="SM00263">
    <property type="entry name" value="LYZ1"/>
    <property type="match status" value="1"/>
</dbReference>
<dbReference type="SUPFAM" id="SSF53955">
    <property type="entry name" value="Lysozyme-like"/>
    <property type="match status" value="1"/>
</dbReference>
<dbReference type="PROSITE" id="PS00128">
    <property type="entry name" value="GLYCOSYL_HYDROL_F22_1"/>
    <property type="match status" value="1"/>
</dbReference>
<dbReference type="PROSITE" id="PS51348">
    <property type="entry name" value="GLYCOSYL_HYDROL_F22_2"/>
    <property type="match status" value="1"/>
</dbReference>
<gene>
    <name type="primary">LysP</name>
    <name type="ORF">CG9116</name>
</gene>
<organism>
    <name type="scientific">Drosophila melanogaster</name>
    <name type="common">Fruit fly</name>
    <dbReference type="NCBI Taxonomy" id="7227"/>
    <lineage>
        <taxon>Eukaryota</taxon>
        <taxon>Metazoa</taxon>
        <taxon>Ecdysozoa</taxon>
        <taxon>Arthropoda</taxon>
        <taxon>Hexapoda</taxon>
        <taxon>Insecta</taxon>
        <taxon>Pterygota</taxon>
        <taxon>Neoptera</taxon>
        <taxon>Endopterygota</taxon>
        <taxon>Diptera</taxon>
        <taxon>Brachycera</taxon>
        <taxon>Muscomorpha</taxon>
        <taxon>Ephydroidea</taxon>
        <taxon>Drosophilidae</taxon>
        <taxon>Drosophila</taxon>
        <taxon>Sophophora</taxon>
    </lineage>
</organism>
<feature type="signal peptide" evidence="1">
    <location>
        <begin position="1"/>
        <end position="18"/>
    </location>
</feature>
<feature type="chain" id="PRO_0000018514" description="Lysozyme P">
    <location>
        <begin position="19"/>
        <end position="141"/>
    </location>
</feature>
<feature type="domain" description="C-type lysozyme" evidence="2">
    <location>
        <begin position="20"/>
        <end position="141"/>
    </location>
</feature>
<feature type="active site" evidence="2">
    <location>
        <position position="51"/>
    </location>
</feature>
<feature type="active site" evidence="2">
    <location>
        <position position="69"/>
    </location>
</feature>
<feature type="disulfide bond" evidence="2">
    <location>
        <begin position="25"/>
        <end position="140"/>
    </location>
</feature>
<feature type="disulfide bond" evidence="2">
    <location>
        <begin position="46"/>
        <end position="130"/>
    </location>
</feature>
<feature type="disulfide bond" evidence="2">
    <location>
        <begin position="81"/>
        <end position="97"/>
    </location>
</feature>
<feature type="disulfide bond" evidence="2">
    <location>
        <begin position="93"/>
        <end position="111"/>
    </location>
</feature>